<evidence type="ECO:0000250" key="1"/>
<evidence type="ECO:0000305" key="2"/>
<sequence>MTNTGLVQSFSQIEPNVLGLETSVTSQICEGLNRALASFQVLYLQYQKHHFTVQGAEFYSLHEFFEDSYGSVKDHVHDLGERLNGLGGVPVAHPLKLAELTCFAIEEDGVFNCRTMLEHDLAAEQAILSLLRRLTAQVESLGDRATRYLLEGILLKTEERAYHIAHFLAPDSLKLA</sequence>
<feature type="chain" id="PRO_0000201654" description="Nutrient stress-induced DNA-binding protein">
    <location>
        <begin position="1"/>
        <end position="176"/>
    </location>
</feature>
<accession>Q9R6T3</accession>
<accession>Q5N0Q6</accession>
<name>DPSA_SYNP6</name>
<protein>
    <recommendedName>
        <fullName>Nutrient stress-induced DNA-binding protein</fullName>
    </recommendedName>
</protein>
<keyword id="KW-0238">DNA-binding</keyword>
<keyword id="KW-0349">Heme</keyword>
<keyword id="KW-0408">Iron</keyword>
<keyword id="KW-0479">Metal-binding</keyword>
<reference key="1">
    <citation type="journal article" date="2007" name="Photosyn. Res.">
        <title>Complete nucleotide sequence of the freshwater unicellular cyanobacterium Synechococcus elongatus PCC 6301 chromosome: gene content and organization.</title>
        <authorList>
            <person name="Sugita C."/>
            <person name="Ogata K."/>
            <person name="Shikata M."/>
            <person name="Jikuya H."/>
            <person name="Takano J."/>
            <person name="Furumichi M."/>
            <person name="Kanehisa M."/>
            <person name="Omata T."/>
            <person name="Sugiura M."/>
            <person name="Sugita M."/>
        </authorList>
    </citation>
    <scope>NUCLEOTIDE SEQUENCE [LARGE SCALE GENOMIC DNA]</scope>
    <source>
        <strain>ATCC 27144 / PCC 6301 / SAUG 1402/1</strain>
    </source>
</reference>
<reference key="2">
    <citation type="journal article" date="1999" name="Microbiology">
        <title>Molecular characterization of idiA and adjacent genes in the cyanobacteria Synechococcus sp. strains PCC 6301 and PCC 7942.</title>
        <authorList>
            <person name="Michel K.-P."/>
            <person name="Krueger F."/>
            <person name="Puehler A."/>
            <person name="Pistorius E.K."/>
        </authorList>
    </citation>
    <scope>NUCLEOTIDE SEQUENCE [GENOMIC DNA] OF 1-175</scope>
</reference>
<organism>
    <name type="scientific">Synechococcus sp. (strain ATCC 27144 / PCC 6301 / SAUG 1402/1)</name>
    <name type="common">Anacystis nidulans</name>
    <dbReference type="NCBI Taxonomy" id="269084"/>
    <lineage>
        <taxon>Bacteria</taxon>
        <taxon>Bacillati</taxon>
        <taxon>Cyanobacteriota</taxon>
        <taxon>Cyanophyceae</taxon>
        <taxon>Synechococcales</taxon>
        <taxon>Synechococcaceae</taxon>
        <taxon>Synechococcus</taxon>
    </lineage>
</organism>
<proteinExistence type="inferred from homology"/>
<comment type="function">
    <text evidence="1">Involved in protection of chromosomal DNA from damage under nutrient-limited and oxidative stress conditions. Binds heme (By similarity).</text>
</comment>
<comment type="subunit">
    <text evidence="1">Hexamer.</text>
</comment>
<comment type="similarity">
    <text evidence="2">Belongs to the Dps family.</text>
</comment>
<gene>
    <name type="primary">dpsA</name>
    <name type="ordered locus">syc1924_d</name>
</gene>
<dbReference type="EMBL" id="AP008231">
    <property type="protein sequence ID" value="BAD80114.1"/>
    <property type="molecule type" value="Genomic_DNA"/>
</dbReference>
<dbReference type="EMBL" id="Z48754">
    <property type="protein sequence ID" value="CAB45544.1"/>
    <property type="molecule type" value="Genomic_DNA"/>
</dbReference>
<dbReference type="RefSeq" id="WP_011244234.1">
    <property type="nucleotide sequence ID" value="NZ_CP085785.1"/>
</dbReference>
<dbReference type="SMR" id="Q9R6T3"/>
<dbReference type="KEGG" id="syc:syc1924_d"/>
<dbReference type="eggNOG" id="COG0783">
    <property type="taxonomic scope" value="Bacteria"/>
</dbReference>
<dbReference type="Proteomes" id="UP000001175">
    <property type="component" value="Chromosome"/>
</dbReference>
<dbReference type="GO" id="GO:0003677">
    <property type="term" value="F:DNA binding"/>
    <property type="evidence" value="ECO:0007669"/>
    <property type="project" value="UniProtKB-KW"/>
</dbReference>
<dbReference type="GO" id="GO:0008199">
    <property type="term" value="F:ferric iron binding"/>
    <property type="evidence" value="ECO:0007669"/>
    <property type="project" value="InterPro"/>
</dbReference>
<dbReference type="GO" id="GO:0016722">
    <property type="term" value="F:oxidoreductase activity, acting on metal ions"/>
    <property type="evidence" value="ECO:0007669"/>
    <property type="project" value="InterPro"/>
</dbReference>
<dbReference type="CDD" id="cd01043">
    <property type="entry name" value="DPS"/>
    <property type="match status" value="1"/>
</dbReference>
<dbReference type="Gene3D" id="1.20.1260.10">
    <property type="match status" value="1"/>
</dbReference>
<dbReference type="InterPro" id="IPR002177">
    <property type="entry name" value="DPS_DNA-bd"/>
</dbReference>
<dbReference type="InterPro" id="IPR023188">
    <property type="entry name" value="DPS_DNA-bd_CS"/>
</dbReference>
<dbReference type="InterPro" id="IPR012347">
    <property type="entry name" value="Ferritin-like"/>
</dbReference>
<dbReference type="InterPro" id="IPR009078">
    <property type="entry name" value="Ferritin-like_SF"/>
</dbReference>
<dbReference type="InterPro" id="IPR008331">
    <property type="entry name" value="Ferritin_DPS_dom"/>
</dbReference>
<dbReference type="PANTHER" id="PTHR42932">
    <property type="entry name" value="GENERAL STRESS PROTEIN 20U"/>
    <property type="match status" value="1"/>
</dbReference>
<dbReference type="PANTHER" id="PTHR42932:SF1">
    <property type="entry name" value="GENERAL STRESS PROTEIN 20U"/>
    <property type="match status" value="1"/>
</dbReference>
<dbReference type="Pfam" id="PF00210">
    <property type="entry name" value="Ferritin"/>
    <property type="match status" value="1"/>
</dbReference>
<dbReference type="PIRSF" id="PIRSF005900">
    <property type="entry name" value="Dps"/>
    <property type="match status" value="1"/>
</dbReference>
<dbReference type="SUPFAM" id="SSF47240">
    <property type="entry name" value="Ferritin-like"/>
    <property type="match status" value="1"/>
</dbReference>
<dbReference type="PROSITE" id="PS00818">
    <property type="entry name" value="DPS_1"/>
    <property type="match status" value="1"/>
</dbReference>
<dbReference type="PROSITE" id="PS00819">
    <property type="entry name" value="DPS_2"/>
    <property type="match status" value="1"/>
</dbReference>